<gene>
    <name type="primary">rps4</name>
    <name type="ordered locus">MoinCp023</name>
</gene>
<dbReference type="EMBL" id="DQ226511">
    <property type="protein sequence ID" value="ABB20960.1"/>
    <property type="molecule type" value="Genomic_DNA"/>
</dbReference>
<dbReference type="RefSeq" id="YP_762263.1">
    <property type="nucleotide sequence ID" value="NC_008359.1"/>
</dbReference>
<dbReference type="SMR" id="Q09X15"/>
<dbReference type="GeneID" id="4290572"/>
<dbReference type="GO" id="GO:0009507">
    <property type="term" value="C:chloroplast"/>
    <property type="evidence" value="ECO:0007669"/>
    <property type="project" value="UniProtKB-SubCell"/>
</dbReference>
<dbReference type="GO" id="GO:0015935">
    <property type="term" value="C:small ribosomal subunit"/>
    <property type="evidence" value="ECO:0007669"/>
    <property type="project" value="InterPro"/>
</dbReference>
<dbReference type="GO" id="GO:0019843">
    <property type="term" value="F:rRNA binding"/>
    <property type="evidence" value="ECO:0007669"/>
    <property type="project" value="UniProtKB-UniRule"/>
</dbReference>
<dbReference type="GO" id="GO:0003735">
    <property type="term" value="F:structural constituent of ribosome"/>
    <property type="evidence" value="ECO:0007669"/>
    <property type="project" value="InterPro"/>
</dbReference>
<dbReference type="GO" id="GO:0042274">
    <property type="term" value="P:ribosomal small subunit biogenesis"/>
    <property type="evidence" value="ECO:0007669"/>
    <property type="project" value="TreeGrafter"/>
</dbReference>
<dbReference type="GO" id="GO:0006412">
    <property type="term" value="P:translation"/>
    <property type="evidence" value="ECO:0007669"/>
    <property type="project" value="UniProtKB-UniRule"/>
</dbReference>
<dbReference type="CDD" id="cd00165">
    <property type="entry name" value="S4"/>
    <property type="match status" value="1"/>
</dbReference>
<dbReference type="FunFam" id="1.10.1050.10:FF:000002">
    <property type="entry name" value="30S ribosomal protein S4, chloroplastic"/>
    <property type="match status" value="1"/>
</dbReference>
<dbReference type="FunFam" id="3.10.290.10:FF:000081">
    <property type="entry name" value="30S ribosomal protein S4, chloroplastic"/>
    <property type="match status" value="1"/>
</dbReference>
<dbReference type="Gene3D" id="1.10.1050.10">
    <property type="entry name" value="Ribosomal Protein S4 Delta 41, Chain A, domain 1"/>
    <property type="match status" value="1"/>
</dbReference>
<dbReference type="Gene3D" id="3.10.290.10">
    <property type="entry name" value="RNA-binding S4 domain"/>
    <property type="match status" value="1"/>
</dbReference>
<dbReference type="HAMAP" id="MF_01306_B">
    <property type="entry name" value="Ribosomal_uS4_B"/>
    <property type="match status" value="1"/>
</dbReference>
<dbReference type="InterPro" id="IPR022801">
    <property type="entry name" value="Ribosomal_uS4"/>
</dbReference>
<dbReference type="InterPro" id="IPR005709">
    <property type="entry name" value="Ribosomal_uS4_bac-type"/>
</dbReference>
<dbReference type="InterPro" id="IPR018079">
    <property type="entry name" value="Ribosomal_uS4_CS"/>
</dbReference>
<dbReference type="InterPro" id="IPR001912">
    <property type="entry name" value="Ribosomal_uS4_N"/>
</dbReference>
<dbReference type="InterPro" id="IPR002942">
    <property type="entry name" value="S4_RNA-bd"/>
</dbReference>
<dbReference type="InterPro" id="IPR036986">
    <property type="entry name" value="S4_RNA-bd_sf"/>
</dbReference>
<dbReference type="NCBIfam" id="NF003717">
    <property type="entry name" value="PRK05327.1"/>
    <property type="match status" value="1"/>
</dbReference>
<dbReference type="NCBIfam" id="TIGR01017">
    <property type="entry name" value="rpsD_bact"/>
    <property type="match status" value="1"/>
</dbReference>
<dbReference type="PANTHER" id="PTHR11831">
    <property type="entry name" value="30S 40S RIBOSOMAL PROTEIN"/>
    <property type="match status" value="1"/>
</dbReference>
<dbReference type="PANTHER" id="PTHR11831:SF4">
    <property type="entry name" value="SMALL RIBOSOMAL SUBUNIT PROTEIN US4M"/>
    <property type="match status" value="1"/>
</dbReference>
<dbReference type="Pfam" id="PF00163">
    <property type="entry name" value="Ribosomal_S4"/>
    <property type="match status" value="1"/>
</dbReference>
<dbReference type="Pfam" id="PF01479">
    <property type="entry name" value="S4"/>
    <property type="match status" value="1"/>
</dbReference>
<dbReference type="SMART" id="SM01390">
    <property type="entry name" value="Ribosomal_S4"/>
    <property type="match status" value="1"/>
</dbReference>
<dbReference type="SMART" id="SM00363">
    <property type="entry name" value="S4"/>
    <property type="match status" value="1"/>
</dbReference>
<dbReference type="SUPFAM" id="SSF55174">
    <property type="entry name" value="Alpha-L RNA-binding motif"/>
    <property type="match status" value="1"/>
</dbReference>
<dbReference type="PROSITE" id="PS00632">
    <property type="entry name" value="RIBOSOMAL_S4"/>
    <property type="match status" value="1"/>
</dbReference>
<dbReference type="PROSITE" id="PS50889">
    <property type="entry name" value="S4"/>
    <property type="match status" value="1"/>
</dbReference>
<comment type="function">
    <text evidence="1">One of the primary rRNA binding proteins, it binds directly to 16S rRNA where it nucleates assembly of the body of the 30S subunit.</text>
</comment>
<comment type="function">
    <text evidence="1">With S5 and S12 plays an important role in translational accuracy.</text>
</comment>
<comment type="subunit">
    <text evidence="1">Part of the 30S ribosomal subunit. Contacts protein S5. The interaction surface between S4 and S5 is involved in control of translational fidelity (By similarity).</text>
</comment>
<comment type="subcellular location">
    <subcellularLocation>
        <location>Plastid</location>
        <location>Chloroplast</location>
    </subcellularLocation>
</comment>
<comment type="similarity">
    <text evidence="3">Belongs to the universal ribosomal protein uS4 family.</text>
</comment>
<keyword id="KW-0150">Chloroplast</keyword>
<keyword id="KW-0934">Plastid</keyword>
<keyword id="KW-0687">Ribonucleoprotein</keyword>
<keyword id="KW-0689">Ribosomal protein</keyword>
<keyword id="KW-0694">RNA-binding</keyword>
<keyword id="KW-0699">rRNA-binding</keyword>
<organism>
    <name type="scientific">Morus indica</name>
    <name type="common">Mulberry</name>
    <dbReference type="NCBI Taxonomy" id="248361"/>
    <lineage>
        <taxon>Eukaryota</taxon>
        <taxon>Viridiplantae</taxon>
        <taxon>Streptophyta</taxon>
        <taxon>Embryophyta</taxon>
        <taxon>Tracheophyta</taxon>
        <taxon>Spermatophyta</taxon>
        <taxon>Magnoliopsida</taxon>
        <taxon>eudicotyledons</taxon>
        <taxon>Gunneridae</taxon>
        <taxon>Pentapetalae</taxon>
        <taxon>rosids</taxon>
        <taxon>fabids</taxon>
        <taxon>Rosales</taxon>
        <taxon>Moraceae</taxon>
        <taxon>Moreae</taxon>
        <taxon>Morus</taxon>
    </lineage>
</organism>
<protein>
    <recommendedName>
        <fullName evidence="3">Small ribosomal subunit protein uS4c</fullName>
    </recommendedName>
    <alternativeName>
        <fullName>30S ribosomal protein S4, chloroplastic</fullName>
    </alternativeName>
</protein>
<proteinExistence type="inferred from homology"/>
<feature type="chain" id="PRO_0000277014" description="Small ribosomal subunit protein uS4c">
    <location>
        <begin position="1"/>
        <end position="201"/>
    </location>
</feature>
<feature type="domain" description="S4 RNA-binding">
    <location>
        <begin position="89"/>
        <end position="151"/>
    </location>
</feature>
<feature type="region of interest" description="Disordered" evidence="2">
    <location>
        <begin position="23"/>
        <end position="42"/>
    </location>
</feature>
<accession>Q09X15</accession>
<sequence length="201" mass="23363">MSRYRGPRFKKIRRLGALPGLTSKKPRAGSNLRNQLRPGKKSQYRIRLEEKQKLRFHYGLTEQQLLKYVRIAGKAKGSTGQVLLQLLEMRLDNILFRLGMASTIPQARQLVNHRHILVNGRIVDIPSYRCKPRDIIRVKDEQKSKSLVQNYLDSSSREELPKHLTLHPFQYKGSVNQIIDSKCVGLKINELLVVEYYSRQT</sequence>
<reference key="1">
    <citation type="submission" date="2005-09" db="EMBL/GenBank/DDBJ databases">
        <title>The chloroplast genome of mulberry: structural features and comparative analysis.</title>
        <authorList>
            <person name="Ravi V."/>
            <person name="Khurana J.P."/>
            <person name="Tyagi A.K."/>
            <person name="Khurana P."/>
        </authorList>
    </citation>
    <scope>NUCLEOTIDE SEQUENCE [LARGE SCALE GENOMIC DNA]</scope>
    <source>
        <strain>cv. K2</strain>
    </source>
</reference>
<geneLocation type="chloroplast"/>
<name>RR4_MORIN</name>
<evidence type="ECO:0000250" key="1"/>
<evidence type="ECO:0000256" key="2">
    <source>
        <dbReference type="SAM" id="MobiDB-lite"/>
    </source>
</evidence>
<evidence type="ECO:0000305" key="3"/>